<comment type="function">
    <text evidence="1">ATP-dependent specificity component of the Clp protease. It directs the protease to specific substrates. Can perform chaperone functions in the absence of ClpP.</text>
</comment>
<comment type="subunit">
    <text evidence="1">Component of the ClpX-ClpP complex. Forms a hexameric ring that, in the presence of ATP, binds to fourteen ClpP subunits assembled into a disk-like structure with a central cavity, resembling the structure of eukaryotic proteasomes.</text>
</comment>
<comment type="similarity">
    <text evidence="1">Belongs to the ClpX chaperone family.</text>
</comment>
<gene>
    <name evidence="1" type="primary">clpX</name>
    <name type="ordered locus">BCAN_A1127</name>
</gene>
<reference key="1">
    <citation type="submission" date="2007-10" db="EMBL/GenBank/DDBJ databases">
        <title>Brucella canis ATCC 23365 whole genome shotgun sequencing project.</title>
        <authorList>
            <person name="Setubal J.C."/>
            <person name="Bowns C."/>
            <person name="Boyle S."/>
            <person name="Crasta O.R."/>
            <person name="Czar M.J."/>
            <person name="Dharmanolla C."/>
            <person name="Gillespie J.J."/>
            <person name="Kenyon R.W."/>
            <person name="Lu J."/>
            <person name="Mane S."/>
            <person name="Mohapatra S."/>
            <person name="Nagrani S."/>
            <person name="Purkayastha A."/>
            <person name="Rajasimha H.K."/>
            <person name="Shallom J.M."/>
            <person name="Shallom S."/>
            <person name="Shukla M."/>
            <person name="Snyder E.E."/>
            <person name="Sobral B.W."/>
            <person name="Wattam A.R."/>
            <person name="Will R."/>
            <person name="Williams K."/>
            <person name="Yoo H."/>
            <person name="Bruce D."/>
            <person name="Detter C."/>
            <person name="Munk C."/>
            <person name="Brettin T.S."/>
        </authorList>
    </citation>
    <scope>NUCLEOTIDE SEQUENCE [LARGE SCALE GENOMIC DNA]</scope>
    <source>
        <strain>ATCC 23365 / NCTC 10854 / RM-666</strain>
    </source>
</reference>
<keyword id="KW-0067">ATP-binding</keyword>
<keyword id="KW-0143">Chaperone</keyword>
<keyword id="KW-0479">Metal-binding</keyword>
<keyword id="KW-0547">Nucleotide-binding</keyword>
<keyword id="KW-1185">Reference proteome</keyword>
<keyword id="KW-0862">Zinc</keyword>
<evidence type="ECO:0000255" key="1">
    <source>
        <dbReference type="HAMAP-Rule" id="MF_00175"/>
    </source>
</evidence>
<evidence type="ECO:0000255" key="2">
    <source>
        <dbReference type="PROSITE-ProRule" id="PRU01250"/>
    </source>
</evidence>
<dbReference type="EMBL" id="CP000872">
    <property type="protein sequence ID" value="ABX62176.1"/>
    <property type="molecule type" value="Genomic_DNA"/>
</dbReference>
<dbReference type="RefSeq" id="WP_006132709.1">
    <property type="nucleotide sequence ID" value="NC_010103.1"/>
</dbReference>
<dbReference type="SMR" id="A9M5C1"/>
<dbReference type="GeneID" id="55590793"/>
<dbReference type="KEGG" id="bcs:BCAN_A1127"/>
<dbReference type="HOGENOM" id="CLU_014218_8_2_5"/>
<dbReference type="PhylomeDB" id="A9M5C1"/>
<dbReference type="Proteomes" id="UP000001385">
    <property type="component" value="Chromosome I"/>
</dbReference>
<dbReference type="GO" id="GO:0009376">
    <property type="term" value="C:HslUV protease complex"/>
    <property type="evidence" value="ECO:0007669"/>
    <property type="project" value="TreeGrafter"/>
</dbReference>
<dbReference type="GO" id="GO:0005524">
    <property type="term" value="F:ATP binding"/>
    <property type="evidence" value="ECO:0007669"/>
    <property type="project" value="UniProtKB-UniRule"/>
</dbReference>
<dbReference type="GO" id="GO:0016887">
    <property type="term" value="F:ATP hydrolysis activity"/>
    <property type="evidence" value="ECO:0007669"/>
    <property type="project" value="InterPro"/>
</dbReference>
<dbReference type="GO" id="GO:0140662">
    <property type="term" value="F:ATP-dependent protein folding chaperone"/>
    <property type="evidence" value="ECO:0007669"/>
    <property type="project" value="InterPro"/>
</dbReference>
<dbReference type="GO" id="GO:0046983">
    <property type="term" value="F:protein dimerization activity"/>
    <property type="evidence" value="ECO:0007669"/>
    <property type="project" value="InterPro"/>
</dbReference>
<dbReference type="GO" id="GO:0051082">
    <property type="term" value="F:unfolded protein binding"/>
    <property type="evidence" value="ECO:0007669"/>
    <property type="project" value="UniProtKB-UniRule"/>
</dbReference>
<dbReference type="GO" id="GO:0008270">
    <property type="term" value="F:zinc ion binding"/>
    <property type="evidence" value="ECO:0007669"/>
    <property type="project" value="InterPro"/>
</dbReference>
<dbReference type="GO" id="GO:0051301">
    <property type="term" value="P:cell division"/>
    <property type="evidence" value="ECO:0007669"/>
    <property type="project" value="TreeGrafter"/>
</dbReference>
<dbReference type="GO" id="GO:0051603">
    <property type="term" value="P:proteolysis involved in protein catabolic process"/>
    <property type="evidence" value="ECO:0007669"/>
    <property type="project" value="TreeGrafter"/>
</dbReference>
<dbReference type="CDD" id="cd19497">
    <property type="entry name" value="RecA-like_ClpX"/>
    <property type="match status" value="1"/>
</dbReference>
<dbReference type="FunFam" id="1.10.8.60:FF:000002">
    <property type="entry name" value="ATP-dependent Clp protease ATP-binding subunit ClpX"/>
    <property type="match status" value="1"/>
</dbReference>
<dbReference type="FunFam" id="3.40.50.300:FF:000005">
    <property type="entry name" value="ATP-dependent Clp protease ATP-binding subunit ClpX"/>
    <property type="match status" value="1"/>
</dbReference>
<dbReference type="Gene3D" id="1.10.8.60">
    <property type="match status" value="1"/>
</dbReference>
<dbReference type="Gene3D" id="6.20.220.10">
    <property type="entry name" value="ClpX chaperone, C4-type zinc finger domain"/>
    <property type="match status" value="1"/>
</dbReference>
<dbReference type="Gene3D" id="3.40.50.300">
    <property type="entry name" value="P-loop containing nucleotide triphosphate hydrolases"/>
    <property type="match status" value="1"/>
</dbReference>
<dbReference type="HAMAP" id="MF_00175">
    <property type="entry name" value="ClpX"/>
    <property type="match status" value="1"/>
</dbReference>
<dbReference type="InterPro" id="IPR003593">
    <property type="entry name" value="AAA+_ATPase"/>
</dbReference>
<dbReference type="InterPro" id="IPR050052">
    <property type="entry name" value="ATP-dep_Clp_protease_ClpX"/>
</dbReference>
<dbReference type="InterPro" id="IPR003959">
    <property type="entry name" value="ATPase_AAA_core"/>
</dbReference>
<dbReference type="InterPro" id="IPR019489">
    <property type="entry name" value="Clp_ATPase_C"/>
</dbReference>
<dbReference type="InterPro" id="IPR004487">
    <property type="entry name" value="Clp_protease_ATP-bd_su_ClpX"/>
</dbReference>
<dbReference type="InterPro" id="IPR046425">
    <property type="entry name" value="ClpX_bact"/>
</dbReference>
<dbReference type="InterPro" id="IPR027417">
    <property type="entry name" value="P-loop_NTPase"/>
</dbReference>
<dbReference type="InterPro" id="IPR010603">
    <property type="entry name" value="Znf_CppX_C4"/>
</dbReference>
<dbReference type="InterPro" id="IPR038366">
    <property type="entry name" value="Znf_CppX_C4_sf"/>
</dbReference>
<dbReference type="NCBIfam" id="TIGR00382">
    <property type="entry name" value="clpX"/>
    <property type="match status" value="1"/>
</dbReference>
<dbReference type="NCBIfam" id="NF003745">
    <property type="entry name" value="PRK05342.1"/>
    <property type="match status" value="1"/>
</dbReference>
<dbReference type="PANTHER" id="PTHR48102:SF7">
    <property type="entry name" value="ATP-DEPENDENT CLP PROTEASE ATP-BINDING SUBUNIT CLPX-LIKE, MITOCHONDRIAL"/>
    <property type="match status" value="1"/>
</dbReference>
<dbReference type="PANTHER" id="PTHR48102">
    <property type="entry name" value="ATP-DEPENDENT CLP PROTEASE ATP-BINDING SUBUNIT CLPX-LIKE, MITOCHONDRIAL-RELATED"/>
    <property type="match status" value="1"/>
</dbReference>
<dbReference type="Pfam" id="PF07724">
    <property type="entry name" value="AAA_2"/>
    <property type="match status" value="1"/>
</dbReference>
<dbReference type="Pfam" id="PF10431">
    <property type="entry name" value="ClpB_D2-small"/>
    <property type="match status" value="1"/>
</dbReference>
<dbReference type="Pfam" id="PF06689">
    <property type="entry name" value="zf-C4_ClpX"/>
    <property type="match status" value="1"/>
</dbReference>
<dbReference type="SMART" id="SM00382">
    <property type="entry name" value="AAA"/>
    <property type="match status" value="1"/>
</dbReference>
<dbReference type="SMART" id="SM01086">
    <property type="entry name" value="ClpB_D2-small"/>
    <property type="match status" value="1"/>
</dbReference>
<dbReference type="SMART" id="SM00994">
    <property type="entry name" value="zf-C4_ClpX"/>
    <property type="match status" value="1"/>
</dbReference>
<dbReference type="SUPFAM" id="SSF57716">
    <property type="entry name" value="Glucocorticoid receptor-like (DNA-binding domain)"/>
    <property type="match status" value="1"/>
</dbReference>
<dbReference type="SUPFAM" id="SSF52540">
    <property type="entry name" value="P-loop containing nucleoside triphosphate hydrolases"/>
    <property type="match status" value="1"/>
</dbReference>
<dbReference type="PROSITE" id="PS51902">
    <property type="entry name" value="CLPX_ZB"/>
    <property type="match status" value="1"/>
</dbReference>
<organism>
    <name type="scientific">Brucella canis (strain ATCC 23365 / NCTC 10854 / RM-666)</name>
    <dbReference type="NCBI Taxonomy" id="483179"/>
    <lineage>
        <taxon>Bacteria</taxon>
        <taxon>Pseudomonadati</taxon>
        <taxon>Pseudomonadota</taxon>
        <taxon>Alphaproteobacteria</taxon>
        <taxon>Hyphomicrobiales</taxon>
        <taxon>Brucellaceae</taxon>
        <taxon>Brucella/Ochrobactrum group</taxon>
        <taxon>Brucella</taxon>
    </lineage>
</organism>
<protein>
    <recommendedName>
        <fullName evidence="1">ATP-dependent Clp protease ATP-binding subunit ClpX</fullName>
    </recommendedName>
</protein>
<feature type="chain" id="PRO_1000077145" description="ATP-dependent Clp protease ATP-binding subunit ClpX">
    <location>
        <begin position="1"/>
        <end position="424"/>
    </location>
</feature>
<feature type="domain" description="ClpX-type ZB" evidence="2">
    <location>
        <begin position="5"/>
        <end position="58"/>
    </location>
</feature>
<feature type="binding site" evidence="2">
    <location>
        <position position="17"/>
    </location>
    <ligand>
        <name>Zn(2+)</name>
        <dbReference type="ChEBI" id="CHEBI:29105"/>
    </ligand>
</feature>
<feature type="binding site" evidence="2">
    <location>
        <position position="20"/>
    </location>
    <ligand>
        <name>Zn(2+)</name>
        <dbReference type="ChEBI" id="CHEBI:29105"/>
    </ligand>
</feature>
<feature type="binding site" evidence="2">
    <location>
        <position position="39"/>
    </location>
    <ligand>
        <name>Zn(2+)</name>
        <dbReference type="ChEBI" id="CHEBI:29105"/>
    </ligand>
</feature>
<feature type="binding site" evidence="2">
    <location>
        <position position="42"/>
    </location>
    <ligand>
        <name>Zn(2+)</name>
        <dbReference type="ChEBI" id="CHEBI:29105"/>
    </ligand>
</feature>
<feature type="binding site" evidence="1">
    <location>
        <begin position="121"/>
        <end position="128"/>
    </location>
    <ligand>
        <name>ATP</name>
        <dbReference type="ChEBI" id="CHEBI:30616"/>
    </ligand>
</feature>
<accession>A9M5C1</accession>
<proteinExistence type="inferred from homology"/>
<sequence>MSKVSNGGGDSKNTLYCSFCGKSQHEVRKLIAGPTVFICDECVELCMDIIREENKSSMVKSREGVPTPQEIMAVLDDYVIGQKDAKRVLSVAVHNHYKRLAHQSKNSDIELAKSNILLVGPTGCGKTYLAQTLARIIDVPFIMADATTLTEAGYVGEDVENIILKLLQAADYNVERAQRGIVYIDEVDKISRKSDNPSITRDVSGEGVQQALLKIMEGTVASVPPQGGRKHPQQEFLQVDTTNILFICGGAFASLDRIISARGEKTSIGFGATVKSVDERRIGEVFKELEPEDLLKFGLIPEFVGRLPVIATLEDLDVDALVQILTEPKNALVKQYQRLFDMENVELVFHDDALRAIANKVVEHKTGARGLRSIMEKILLDTMFELPTLEGVREVVISGDVVDGSARPLYIYAERQDEKGNVSA</sequence>
<name>CLPX_BRUC2</name>